<dbReference type="EC" id="6.3.2.31" evidence="1"/>
<dbReference type="EC" id="6.3.2.34" evidence="1"/>
<dbReference type="EC" id="1.3.8.17" evidence="1"/>
<dbReference type="EMBL" id="AP010918">
    <property type="protein sequence ID" value="BAH27565.1"/>
    <property type="molecule type" value="Genomic_DNA"/>
</dbReference>
<dbReference type="RefSeq" id="WP_003900663.1">
    <property type="nucleotide sequence ID" value="NZ_CP014566.1"/>
</dbReference>
<dbReference type="SMR" id="C1AH36"/>
<dbReference type="KEGG" id="mbt:JTY_3287"/>
<dbReference type="HOGENOM" id="CLU_051152_0_0_11"/>
<dbReference type="UniPathway" id="UPA00071"/>
<dbReference type="GO" id="GO:0052618">
    <property type="term" value="F:coenzyme F420-0:L-glutamate ligase activity"/>
    <property type="evidence" value="ECO:0007669"/>
    <property type="project" value="UniProtKB-UniRule"/>
</dbReference>
<dbReference type="GO" id="GO:0052619">
    <property type="term" value="F:coenzyme F420-1:gamma-L-glutamate ligase activity"/>
    <property type="evidence" value="ECO:0007669"/>
    <property type="project" value="UniProtKB-UniRule"/>
</dbReference>
<dbReference type="GO" id="GO:0005525">
    <property type="term" value="F:GTP binding"/>
    <property type="evidence" value="ECO:0007669"/>
    <property type="project" value="UniProtKB-KW"/>
</dbReference>
<dbReference type="GO" id="GO:0046872">
    <property type="term" value="F:metal ion binding"/>
    <property type="evidence" value="ECO:0007669"/>
    <property type="project" value="UniProtKB-KW"/>
</dbReference>
<dbReference type="GO" id="GO:0052890">
    <property type="term" value="F:oxidoreductase activity, acting on the CH-CH group of donors, with a flavin as acceptor"/>
    <property type="evidence" value="ECO:0007669"/>
    <property type="project" value="UniProtKB-UniRule"/>
</dbReference>
<dbReference type="GO" id="GO:0052645">
    <property type="term" value="P:F420-0 metabolic process"/>
    <property type="evidence" value="ECO:0007669"/>
    <property type="project" value="UniProtKB-UniRule"/>
</dbReference>
<dbReference type="CDD" id="cd20607">
    <property type="entry name" value="FbiB_C-like"/>
    <property type="match status" value="1"/>
</dbReference>
<dbReference type="FunFam" id="3.40.109.10:FF:000009">
    <property type="entry name" value="Coenzyme F420:L-glutamate ligase"/>
    <property type="match status" value="1"/>
</dbReference>
<dbReference type="Gene3D" id="3.30.1330.100">
    <property type="entry name" value="CofE-like"/>
    <property type="match status" value="1"/>
</dbReference>
<dbReference type="Gene3D" id="3.90.1660.10">
    <property type="entry name" value="CofE-like domain"/>
    <property type="match status" value="1"/>
</dbReference>
<dbReference type="Gene3D" id="3.40.109.10">
    <property type="entry name" value="NADH Oxidase"/>
    <property type="match status" value="1"/>
</dbReference>
<dbReference type="HAMAP" id="MF_01259">
    <property type="entry name" value="F420_ligase_FbiB"/>
    <property type="match status" value="1"/>
</dbReference>
<dbReference type="InterPro" id="IPR008225">
    <property type="entry name" value="F420-0_g-glutamyl_ligase"/>
</dbReference>
<dbReference type="InterPro" id="IPR002847">
    <property type="entry name" value="F420-0_gamma-glut_ligase-dom"/>
</dbReference>
<dbReference type="InterPro" id="IPR019943">
    <property type="entry name" value="F420_FbiB_C"/>
</dbReference>
<dbReference type="InterPro" id="IPR023661">
    <property type="entry name" value="FbiB"/>
</dbReference>
<dbReference type="InterPro" id="IPR029479">
    <property type="entry name" value="Nitroreductase"/>
</dbReference>
<dbReference type="InterPro" id="IPR000415">
    <property type="entry name" value="Nitroreductase-like"/>
</dbReference>
<dbReference type="NCBIfam" id="TIGR01916">
    <property type="entry name" value="F420_cofE"/>
    <property type="match status" value="1"/>
</dbReference>
<dbReference type="NCBIfam" id="TIGR03553">
    <property type="entry name" value="F420_FbiB_CTERM"/>
    <property type="match status" value="1"/>
</dbReference>
<dbReference type="NCBIfam" id="NF009810">
    <property type="entry name" value="PRK13294.1"/>
    <property type="match status" value="1"/>
</dbReference>
<dbReference type="PANTHER" id="PTHR47917">
    <property type="match status" value="1"/>
</dbReference>
<dbReference type="PANTHER" id="PTHR47917:SF1">
    <property type="entry name" value="COENZYME F420:L-GLUTAMATE LIGASE"/>
    <property type="match status" value="1"/>
</dbReference>
<dbReference type="Pfam" id="PF01996">
    <property type="entry name" value="F420_ligase"/>
    <property type="match status" value="1"/>
</dbReference>
<dbReference type="Pfam" id="PF00881">
    <property type="entry name" value="Nitroreductase"/>
    <property type="match status" value="1"/>
</dbReference>
<dbReference type="SUPFAM" id="SSF144010">
    <property type="entry name" value="CofE-like"/>
    <property type="match status" value="1"/>
</dbReference>
<dbReference type="SUPFAM" id="SSF55469">
    <property type="entry name" value="FMN-dependent nitroreductase-like"/>
    <property type="match status" value="1"/>
</dbReference>
<feature type="chain" id="PRO_1000165112" description="Bifunctional F420 biosynthesis protein FbiB">
    <location>
        <begin position="1"/>
        <end position="448"/>
    </location>
</feature>
<feature type="region of interest" description="Coenzyme F420:L-glutamate ligase" evidence="1">
    <location>
        <begin position="1"/>
        <end position="244"/>
    </location>
</feature>
<feature type="region of interest" description="Dehydro-coenzyme F420-0 reductase" evidence="1">
    <location>
        <begin position="245"/>
        <end position="448"/>
    </location>
</feature>
<feature type="binding site" evidence="1">
    <location>
        <begin position="20"/>
        <end position="23"/>
    </location>
    <ligand>
        <name>GTP</name>
        <dbReference type="ChEBI" id="CHEBI:37565"/>
    </ligand>
</feature>
<feature type="binding site" evidence="1">
    <location>
        <position position="50"/>
    </location>
    <ligand>
        <name>GTP</name>
        <dbReference type="ChEBI" id="CHEBI:37565"/>
    </ligand>
</feature>
<feature type="binding site" evidence="1">
    <location>
        <position position="55"/>
    </location>
    <ligand>
        <name>GTP</name>
        <dbReference type="ChEBI" id="CHEBI:37565"/>
    </ligand>
</feature>
<feature type="binding site" evidence="1">
    <location>
        <position position="109"/>
    </location>
    <ligand>
        <name>a divalent metal cation</name>
        <dbReference type="ChEBI" id="CHEBI:60240"/>
        <label>1</label>
    </ligand>
</feature>
<feature type="binding site" evidence="1">
    <location>
        <position position="112"/>
    </location>
    <ligand>
        <name>GTP</name>
        <dbReference type="ChEBI" id="CHEBI:37565"/>
    </ligand>
</feature>
<feature type="binding site" evidence="1">
    <location>
        <position position="150"/>
    </location>
    <ligand>
        <name>a divalent metal cation</name>
        <dbReference type="ChEBI" id="CHEBI:60240"/>
        <label>1</label>
    </ligand>
</feature>
<feature type="binding site" evidence="1">
    <location>
        <position position="151"/>
    </location>
    <ligand>
        <name>a divalent metal cation</name>
        <dbReference type="ChEBI" id="CHEBI:60240"/>
        <label>2</label>
    </ligand>
</feature>
<feature type="binding site" evidence="1">
    <location>
        <begin position="260"/>
        <end position="264"/>
    </location>
    <ligand>
        <name>FMN</name>
        <dbReference type="ChEBI" id="CHEBI:58210"/>
    </ligand>
</feature>
<feature type="binding site" evidence="1">
    <location>
        <position position="288"/>
    </location>
    <ligand>
        <name>FMN</name>
        <dbReference type="ChEBI" id="CHEBI:58210"/>
    </ligand>
</feature>
<feature type="binding site" evidence="1">
    <location>
        <position position="320"/>
    </location>
    <ligand>
        <name>coenzyme F420-(gamma-Glu)n</name>
        <dbReference type="ChEBI" id="CHEBI:133980"/>
    </ligand>
</feature>
<feature type="binding site" evidence="1">
    <location>
        <position position="399"/>
    </location>
    <ligand>
        <name>FMN</name>
        <dbReference type="ChEBI" id="CHEBI:58210"/>
    </ligand>
</feature>
<feature type="binding site" evidence="1">
    <location>
        <position position="436"/>
    </location>
    <ligand>
        <name>FMN</name>
        <dbReference type="ChEBI" id="CHEBI:58210"/>
    </ligand>
</feature>
<comment type="function">
    <text evidence="1">Bifunctional enzyme that catalyzes the GTP-dependent successive addition of multiple gamma-linked L-glutamates to the L-lactyl phosphodiester of 7,8-didemethyl-8-hydroxy-5-deazariboflavin (F420-0) to form polyglutamated F420 derivatives, and the FMNH2-dependent reduction of dehydro-F420-0 to form F420-0.</text>
</comment>
<comment type="catalytic activity">
    <reaction evidence="1">
        <text>oxidized coenzyme F420-0 + GTP + L-glutamate = oxidized coenzyme F420-1 + GDP + phosphate + H(+)</text>
        <dbReference type="Rhea" id="RHEA:30555"/>
        <dbReference type="ChEBI" id="CHEBI:15378"/>
        <dbReference type="ChEBI" id="CHEBI:29985"/>
        <dbReference type="ChEBI" id="CHEBI:37565"/>
        <dbReference type="ChEBI" id="CHEBI:43474"/>
        <dbReference type="ChEBI" id="CHEBI:58189"/>
        <dbReference type="ChEBI" id="CHEBI:59907"/>
        <dbReference type="ChEBI" id="CHEBI:59920"/>
        <dbReference type="EC" id="6.3.2.31"/>
    </reaction>
</comment>
<comment type="catalytic activity">
    <reaction evidence="1">
        <text>oxidized coenzyme F420-1 + GTP + L-glutamate = oxidized coenzyme F420-2 + GDP + phosphate + H(+)</text>
        <dbReference type="Rhea" id="RHEA:30523"/>
        <dbReference type="ChEBI" id="CHEBI:15378"/>
        <dbReference type="ChEBI" id="CHEBI:29985"/>
        <dbReference type="ChEBI" id="CHEBI:37565"/>
        <dbReference type="ChEBI" id="CHEBI:43474"/>
        <dbReference type="ChEBI" id="CHEBI:57922"/>
        <dbReference type="ChEBI" id="CHEBI:58189"/>
        <dbReference type="ChEBI" id="CHEBI:59920"/>
        <dbReference type="EC" id="6.3.2.34"/>
    </reaction>
</comment>
<comment type="catalytic activity">
    <reaction evidence="1">
        <text>oxidized coenzyme F420-(gamma-L-Glu)(n) + GTP + L-glutamate = oxidized coenzyme F420-(gamma-L-Glu)(n+1) + GDP + phosphate + H(+)</text>
        <dbReference type="Rhea" id="RHEA:51236"/>
        <dbReference type="Rhea" id="RHEA-COMP:12939"/>
        <dbReference type="Rhea" id="RHEA-COMP:12940"/>
        <dbReference type="ChEBI" id="CHEBI:15378"/>
        <dbReference type="ChEBI" id="CHEBI:29985"/>
        <dbReference type="ChEBI" id="CHEBI:37565"/>
        <dbReference type="ChEBI" id="CHEBI:43474"/>
        <dbReference type="ChEBI" id="CHEBI:58189"/>
        <dbReference type="ChEBI" id="CHEBI:133980"/>
    </reaction>
</comment>
<comment type="catalytic activity">
    <reaction evidence="1">
        <text>oxidized coenzyme F420-0 + FMN + H(+) = dehydro coenzyme F420-0 + FMNH2</text>
        <dbReference type="Rhea" id="RHEA:60360"/>
        <dbReference type="ChEBI" id="CHEBI:15378"/>
        <dbReference type="ChEBI" id="CHEBI:57618"/>
        <dbReference type="ChEBI" id="CHEBI:58210"/>
        <dbReference type="ChEBI" id="CHEBI:59907"/>
        <dbReference type="ChEBI" id="CHEBI:143705"/>
        <dbReference type="EC" id="1.3.8.17"/>
    </reaction>
</comment>
<comment type="cofactor">
    <cofactor evidence="1">
        <name>Mg(2+)</name>
        <dbReference type="ChEBI" id="CHEBI:18420"/>
    </cofactor>
    <cofactor evidence="1">
        <name>Mn(2+)</name>
        <dbReference type="ChEBI" id="CHEBI:29035"/>
    </cofactor>
    <text evidence="1">Binds 2 divalent metal cations per subunit. The ions could be magnesium and/or manganese.</text>
</comment>
<comment type="cofactor">
    <cofactor evidence="1">
        <name>K(+)</name>
        <dbReference type="ChEBI" id="CHEBI:29103"/>
    </cofactor>
    <text evidence="1">Monovalent cation. The ion could be potassium.</text>
</comment>
<comment type="pathway">
    <text evidence="1">Cofactor biosynthesis; coenzyme F420 biosynthesis.</text>
</comment>
<comment type="similarity">
    <text evidence="1">In the N-terminal section; belongs to the CofE family.</text>
</comment>
<protein>
    <recommendedName>
        <fullName evidence="1">Bifunctional F420 biosynthesis protein FbiB</fullName>
    </recommendedName>
    <domain>
        <recommendedName>
            <fullName evidence="1">Coenzyme F420:L-glutamate ligase</fullName>
            <ecNumber evidence="1">6.3.2.31</ecNumber>
            <ecNumber evidence="1">6.3.2.34</ecNumber>
        </recommendedName>
        <alternativeName>
            <fullName evidence="1">Coenzyme F420-0:L-glutamate ligase</fullName>
        </alternativeName>
        <alternativeName>
            <fullName evidence="1">Coenzyme F420-1:gamma-L-glutamate ligase</fullName>
        </alternativeName>
    </domain>
    <domain>
        <recommendedName>
            <fullName evidence="1">Dehydro-coenzyme F420-0 reductase</fullName>
            <ecNumber evidence="1">1.3.8.17</ecNumber>
        </recommendedName>
    </domain>
</protein>
<reference key="1">
    <citation type="journal article" date="2009" name="Vaccine">
        <title>Whole genome sequence analysis of Mycobacterium bovis bacillus Calmette-Guerin (BCG) Tokyo 172: a comparative study of BCG vaccine substrains.</title>
        <authorList>
            <person name="Seki M."/>
            <person name="Honda I."/>
            <person name="Fujita I."/>
            <person name="Yano I."/>
            <person name="Yamamoto S."/>
            <person name="Koyama A."/>
        </authorList>
    </citation>
    <scope>NUCLEOTIDE SEQUENCE [LARGE SCALE GENOMIC DNA]</scope>
    <source>
        <strain>BCG / Tokyo 172 / ATCC 35737 / TMC 1019</strain>
    </source>
</reference>
<keyword id="KW-0342">GTP-binding</keyword>
<keyword id="KW-0436">Ligase</keyword>
<keyword id="KW-0460">Magnesium</keyword>
<keyword id="KW-0464">Manganese</keyword>
<keyword id="KW-0479">Metal-binding</keyword>
<keyword id="KW-0511">Multifunctional enzyme</keyword>
<keyword id="KW-0547">Nucleotide-binding</keyword>
<keyword id="KW-0560">Oxidoreductase</keyword>
<keyword id="KW-0630">Potassium</keyword>
<evidence type="ECO:0000255" key="1">
    <source>
        <dbReference type="HAMAP-Rule" id="MF_01259"/>
    </source>
</evidence>
<accession>C1AH36</accession>
<organism>
    <name type="scientific">Mycobacterium bovis (strain BCG / Tokyo 172 / ATCC 35737 / TMC 1019)</name>
    <dbReference type="NCBI Taxonomy" id="561275"/>
    <lineage>
        <taxon>Bacteria</taxon>
        <taxon>Bacillati</taxon>
        <taxon>Actinomycetota</taxon>
        <taxon>Actinomycetes</taxon>
        <taxon>Mycobacteriales</taxon>
        <taxon>Mycobacteriaceae</taxon>
        <taxon>Mycobacterium</taxon>
        <taxon>Mycobacterium tuberculosis complex</taxon>
    </lineage>
</organism>
<proteinExistence type="inferred from homology"/>
<gene>
    <name evidence="1" type="primary">fbiB</name>
    <name type="ordered locus">JTY_3287</name>
</gene>
<name>FBIB_MYCBT</name>
<sequence>MTGPEHGSASTIEILPVIGLPEFRPGDDLSAAVAAAAPWLRDGDVVVVTSKVVSKCEGRLVPAPEDPEQRDRLRRKLIEDEAVRVLARKDRTLITENRLGLVQAAAGVDGSNVGRSELALLPVDPDASAATLRAGLRERLGVTVAVVITDTMGRAWRNGQTDAAVGAAGLAVLRNYAGVRDPYGNELVVTEVAVADEIAAAADLVKGKLTATPVAVVRGFGVSDDGSTARQLLRPGANDLFWLGTAEALELGRQQAQLLRRSVRRFSTDPVPGDLVEAAVAEALTAPAPHHTRPTRFVWLQTPAIRARLLDRMKDKWRSDLTSDGLPADAIERRVARGQILYDAPEVVIPMLVPDGAHSYPDAARTDAEHTMFTVAVGAAVQALLVALAVRGLGSCWIGSTIFAADLVRDELDLPVDWEPLGAIAIGYADEPSGLRDPVPAADLLILK</sequence>